<organism>
    <name type="scientific">Teredinibacter turnerae (strain ATCC 39867 / T7901)</name>
    <dbReference type="NCBI Taxonomy" id="377629"/>
    <lineage>
        <taxon>Bacteria</taxon>
        <taxon>Pseudomonadati</taxon>
        <taxon>Pseudomonadota</taxon>
        <taxon>Gammaproteobacteria</taxon>
        <taxon>Cellvibrionales</taxon>
        <taxon>Cellvibrionaceae</taxon>
        <taxon>Teredinibacter</taxon>
    </lineage>
</organism>
<proteinExistence type="inferred from homology"/>
<comment type="function">
    <text evidence="1">Dual-specificity methyltransferase that catalyzes the formation of 5-methyluridine at position 54 (m5U54) in all tRNAs, and that of position 341 (m5U341) in tmRNA (transfer-mRNA).</text>
</comment>
<comment type="catalytic activity">
    <reaction evidence="1">
        <text>uridine(54) in tRNA + S-adenosyl-L-methionine = 5-methyluridine(54) in tRNA + S-adenosyl-L-homocysteine + H(+)</text>
        <dbReference type="Rhea" id="RHEA:42712"/>
        <dbReference type="Rhea" id="RHEA-COMP:10167"/>
        <dbReference type="Rhea" id="RHEA-COMP:10193"/>
        <dbReference type="ChEBI" id="CHEBI:15378"/>
        <dbReference type="ChEBI" id="CHEBI:57856"/>
        <dbReference type="ChEBI" id="CHEBI:59789"/>
        <dbReference type="ChEBI" id="CHEBI:65315"/>
        <dbReference type="ChEBI" id="CHEBI:74447"/>
        <dbReference type="EC" id="2.1.1.35"/>
    </reaction>
</comment>
<comment type="catalytic activity">
    <reaction evidence="1">
        <text>uridine(341) in tmRNA + S-adenosyl-L-methionine = 5-methyluridine(341) in tmRNA + S-adenosyl-L-homocysteine + H(+)</text>
        <dbReference type="Rhea" id="RHEA:43612"/>
        <dbReference type="Rhea" id="RHEA-COMP:10630"/>
        <dbReference type="Rhea" id="RHEA-COMP:10631"/>
        <dbReference type="ChEBI" id="CHEBI:15378"/>
        <dbReference type="ChEBI" id="CHEBI:57856"/>
        <dbReference type="ChEBI" id="CHEBI:59789"/>
        <dbReference type="ChEBI" id="CHEBI:65315"/>
        <dbReference type="ChEBI" id="CHEBI:74447"/>
    </reaction>
</comment>
<comment type="similarity">
    <text evidence="1">Belongs to the class I-like SAM-binding methyltransferase superfamily. RNA M5U methyltransferase family. TrmA subfamily.</text>
</comment>
<dbReference type="EC" id="2.1.1.-" evidence="1"/>
<dbReference type="EC" id="2.1.1.35" evidence="1"/>
<dbReference type="EMBL" id="CP001614">
    <property type="protein sequence ID" value="ACR13725.1"/>
    <property type="molecule type" value="Genomic_DNA"/>
</dbReference>
<dbReference type="RefSeq" id="WP_015819840.1">
    <property type="nucleotide sequence ID" value="NC_012997.1"/>
</dbReference>
<dbReference type="SMR" id="C5BTY4"/>
<dbReference type="STRING" id="377629.TERTU_1632"/>
<dbReference type="KEGG" id="ttu:TERTU_1632"/>
<dbReference type="eggNOG" id="COG2265">
    <property type="taxonomic scope" value="Bacteria"/>
</dbReference>
<dbReference type="HOGENOM" id="CLU_043022_0_0_6"/>
<dbReference type="OrthoDB" id="9804590at2"/>
<dbReference type="Proteomes" id="UP000009080">
    <property type="component" value="Chromosome"/>
</dbReference>
<dbReference type="GO" id="GO:0005829">
    <property type="term" value="C:cytosol"/>
    <property type="evidence" value="ECO:0007669"/>
    <property type="project" value="TreeGrafter"/>
</dbReference>
<dbReference type="GO" id="GO:0019843">
    <property type="term" value="F:rRNA binding"/>
    <property type="evidence" value="ECO:0007669"/>
    <property type="project" value="TreeGrafter"/>
</dbReference>
<dbReference type="GO" id="GO:0030697">
    <property type="term" value="F:tRNA (uracil(54)-C5)-methyltransferase activity, S-adenosyl methionine-dependent"/>
    <property type="evidence" value="ECO:0007669"/>
    <property type="project" value="UniProtKB-UniRule"/>
</dbReference>
<dbReference type="GO" id="GO:0000049">
    <property type="term" value="F:tRNA binding"/>
    <property type="evidence" value="ECO:0007669"/>
    <property type="project" value="TreeGrafter"/>
</dbReference>
<dbReference type="GO" id="GO:0030488">
    <property type="term" value="P:tRNA methylation"/>
    <property type="evidence" value="ECO:0007669"/>
    <property type="project" value="UniProtKB-UniRule"/>
</dbReference>
<dbReference type="CDD" id="cd02440">
    <property type="entry name" value="AdoMet_MTases"/>
    <property type="match status" value="1"/>
</dbReference>
<dbReference type="FunFam" id="2.40.50.1070:FF:000001">
    <property type="entry name" value="tRNA/tmRNA (uracil-C(5))-methyltransferase"/>
    <property type="match status" value="1"/>
</dbReference>
<dbReference type="FunFam" id="3.40.50.150:FF:000012">
    <property type="entry name" value="tRNA/tmRNA (uracil-C(5))-methyltransferase"/>
    <property type="match status" value="1"/>
</dbReference>
<dbReference type="Gene3D" id="2.40.50.1070">
    <property type="match status" value="1"/>
</dbReference>
<dbReference type="Gene3D" id="3.40.50.150">
    <property type="entry name" value="Vaccinia Virus protein VP39"/>
    <property type="match status" value="1"/>
</dbReference>
<dbReference type="HAMAP" id="MF_01011">
    <property type="entry name" value="RNA_methyltr_TrmA"/>
    <property type="match status" value="1"/>
</dbReference>
<dbReference type="InterPro" id="IPR030390">
    <property type="entry name" value="MeTrfase_TrmA_AS"/>
</dbReference>
<dbReference type="InterPro" id="IPR029063">
    <property type="entry name" value="SAM-dependent_MTases_sf"/>
</dbReference>
<dbReference type="InterPro" id="IPR011869">
    <property type="entry name" value="TrmA_MeTrfase"/>
</dbReference>
<dbReference type="InterPro" id="IPR010280">
    <property type="entry name" value="U5_MeTrfase_fam"/>
</dbReference>
<dbReference type="NCBIfam" id="TIGR02143">
    <property type="entry name" value="trmA_only"/>
    <property type="match status" value="1"/>
</dbReference>
<dbReference type="PANTHER" id="PTHR47790">
    <property type="entry name" value="TRNA/TMRNA (URACIL-C(5))-METHYLTRANSFERASE"/>
    <property type="match status" value="1"/>
</dbReference>
<dbReference type="PANTHER" id="PTHR47790:SF2">
    <property type="entry name" value="TRNA_TMRNA (URACIL-C(5))-METHYLTRANSFERASE"/>
    <property type="match status" value="1"/>
</dbReference>
<dbReference type="Pfam" id="PF05958">
    <property type="entry name" value="tRNA_U5-meth_tr"/>
    <property type="match status" value="1"/>
</dbReference>
<dbReference type="SUPFAM" id="SSF53335">
    <property type="entry name" value="S-adenosyl-L-methionine-dependent methyltransferases"/>
    <property type="match status" value="1"/>
</dbReference>
<dbReference type="PROSITE" id="PS51687">
    <property type="entry name" value="SAM_MT_RNA_M5U"/>
    <property type="match status" value="1"/>
</dbReference>
<dbReference type="PROSITE" id="PS01230">
    <property type="entry name" value="TRMA_1"/>
    <property type="match status" value="1"/>
</dbReference>
<reference key="1">
    <citation type="journal article" date="2009" name="PLoS ONE">
        <title>The complete genome of Teredinibacter turnerae T7901: an intracellular endosymbiont of marine wood-boring bivalves (shipworms).</title>
        <authorList>
            <person name="Yang J.C."/>
            <person name="Madupu R."/>
            <person name="Durkin A.S."/>
            <person name="Ekborg N.A."/>
            <person name="Pedamallu C.S."/>
            <person name="Hostetler J.B."/>
            <person name="Radune D."/>
            <person name="Toms B.S."/>
            <person name="Henrissat B."/>
            <person name="Coutinho P.M."/>
            <person name="Schwarz S."/>
            <person name="Field L."/>
            <person name="Trindade-Silva A.E."/>
            <person name="Soares C.A.G."/>
            <person name="Elshahawi S."/>
            <person name="Hanora A."/>
            <person name="Schmidt E.W."/>
            <person name="Haygood M.G."/>
            <person name="Posfai J."/>
            <person name="Benner J."/>
            <person name="Madinger C."/>
            <person name="Nove J."/>
            <person name="Anton B."/>
            <person name="Chaudhary K."/>
            <person name="Foster J."/>
            <person name="Holman A."/>
            <person name="Kumar S."/>
            <person name="Lessard P.A."/>
            <person name="Luyten Y.A."/>
            <person name="Slatko B."/>
            <person name="Wood N."/>
            <person name="Wu B."/>
            <person name="Teplitski M."/>
            <person name="Mougous J.D."/>
            <person name="Ward N."/>
            <person name="Eisen J.A."/>
            <person name="Badger J.H."/>
            <person name="Distel D.L."/>
        </authorList>
    </citation>
    <scope>NUCLEOTIDE SEQUENCE [LARGE SCALE GENOMIC DNA]</scope>
    <source>
        <strain>ATCC 39867 / T7901</strain>
    </source>
</reference>
<feature type="chain" id="PRO_1000213199" description="tRNA/tmRNA (uracil-C(5))-methyltransferase">
    <location>
        <begin position="1"/>
        <end position="364"/>
    </location>
</feature>
<feature type="active site" description="Nucleophile" evidence="1">
    <location>
        <position position="322"/>
    </location>
</feature>
<feature type="active site" description="Proton acceptor" evidence="1">
    <location>
        <position position="356"/>
    </location>
</feature>
<feature type="binding site" evidence="1">
    <location>
        <position position="188"/>
    </location>
    <ligand>
        <name>S-adenosyl-L-methionine</name>
        <dbReference type="ChEBI" id="CHEBI:59789"/>
    </ligand>
</feature>
<feature type="binding site" evidence="1">
    <location>
        <position position="216"/>
    </location>
    <ligand>
        <name>S-adenosyl-L-methionine</name>
        <dbReference type="ChEBI" id="CHEBI:59789"/>
    </ligand>
</feature>
<feature type="binding site" evidence="1">
    <location>
        <position position="221"/>
    </location>
    <ligand>
        <name>S-adenosyl-L-methionine</name>
        <dbReference type="ChEBI" id="CHEBI:59789"/>
    </ligand>
</feature>
<feature type="binding site" evidence="1">
    <location>
        <position position="237"/>
    </location>
    <ligand>
        <name>S-adenosyl-L-methionine</name>
        <dbReference type="ChEBI" id="CHEBI:59789"/>
    </ligand>
</feature>
<feature type="binding site" evidence="1">
    <location>
        <position position="297"/>
    </location>
    <ligand>
        <name>S-adenosyl-L-methionine</name>
        <dbReference type="ChEBI" id="CHEBI:59789"/>
    </ligand>
</feature>
<sequence>MQPGSAPTETYDVQFSEKIERTRDQFKDFFNGEIDAFRSPASEYRMRAEFKIWHDKDTGRACYAMHQPKVKNQVIPIEDFEIGSARIRELMPDVLAAVNNSTLLKQKLFQIEFLTATSGDAVVSLIYHRPLSEQWQAEAEQLQSTLRCQLIGRSRKQKIALGRDYVLETLLVNDKSYTYQQVETGFTQPNAAVCQKMLTWAQTVSADIGGDLLELYCGNGNFTLPLAQNFSRVLATEVSKTSVKSALYNIEQNGATNIAIARLSSEEFTEAMNKVRRFRRLENIDLDSYQFSTIFVDPPRAGLDTDTVKLASRFDNIIYISCNPDTLADNLASLATTHEVTRLALFDQFPYTEHRECGVILRRR</sequence>
<gene>
    <name evidence="1" type="primary">trmA</name>
    <name type="ordered locus">TERTU_1632</name>
</gene>
<protein>
    <recommendedName>
        <fullName evidence="1">tRNA/tmRNA (uracil-C(5))-methyltransferase</fullName>
        <ecNumber evidence="1">2.1.1.-</ecNumber>
        <ecNumber evidence="1">2.1.1.35</ecNumber>
    </recommendedName>
    <alternativeName>
        <fullName evidence="1">tRNA (uracil(54)-C(5))-methyltransferase</fullName>
    </alternativeName>
    <alternativeName>
        <fullName evidence="1">tRNA(m5U54)-methyltransferase</fullName>
        <shortName evidence="1">RUMT</shortName>
    </alternativeName>
    <alternativeName>
        <fullName evidence="1">tmRNA (uracil(341)-C(5))-methyltransferase</fullName>
    </alternativeName>
</protein>
<name>TRMA_TERTT</name>
<keyword id="KW-0489">Methyltransferase</keyword>
<keyword id="KW-1185">Reference proteome</keyword>
<keyword id="KW-0949">S-adenosyl-L-methionine</keyword>
<keyword id="KW-0808">Transferase</keyword>
<keyword id="KW-0819">tRNA processing</keyword>
<evidence type="ECO:0000255" key="1">
    <source>
        <dbReference type="HAMAP-Rule" id="MF_01011"/>
    </source>
</evidence>
<accession>C5BTY4</accession>